<protein>
    <recommendedName>
        <fullName>Rho guanine nucleotide exchange factor gef2</fullName>
    </recommendedName>
</protein>
<organism>
    <name type="scientific">Schizosaccharomyces pombe (strain 972 / ATCC 24843)</name>
    <name type="common">Fission yeast</name>
    <dbReference type="NCBI Taxonomy" id="284812"/>
    <lineage>
        <taxon>Eukaryota</taxon>
        <taxon>Fungi</taxon>
        <taxon>Dikarya</taxon>
        <taxon>Ascomycota</taxon>
        <taxon>Taphrinomycotina</taxon>
        <taxon>Schizosaccharomycetes</taxon>
        <taxon>Schizosaccharomycetales</taxon>
        <taxon>Schizosaccharomycetaceae</taxon>
        <taxon>Schizosaccharomyces</taxon>
    </lineage>
</organism>
<feature type="chain" id="PRO_0000080989" description="Rho guanine nucleotide exchange factor gef2">
    <location>
        <begin position="1"/>
        <end position="1101"/>
    </location>
</feature>
<feature type="domain" description="DH" evidence="1">
    <location>
        <begin position="230"/>
        <end position="428"/>
    </location>
</feature>
<feature type="region of interest" description="Disordered" evidence="2">
    <location>
        <begin position="203"/>
        <end position="222"/>
    </location>
</feature>
<feature type="compositionally biased region" description="Low complexity" evidence="2">
    <location>
        <begin position="210"/>
        <end position="219"/>
    </location>
</feature>
<feature type="modified residue" description="Phosphoserine" evidence="5">
    <location>
        <position position="736"/>
    </location>
</feature>
<feature type="modified residue" description="Phosphoserine" evidence="5">
    <location>
        <position position="977"/>
    </location>
</feature>
<reference key="1">
    <citation type="journal article" date="2002" name="Nature">
        <title>The genome sequence of Schizosaccharomyces pombe.</title>
        <authorList>
            <person name="Wood V."/>
            <person name="Gwilliam R."/>
            <person name="Rajandream M.A."/>
            <person name="Lyne M.H."/>
            <person name="Lyne R."/>
            <person name="Stewart A."/>
            <person name="Sgouros J.G."/>
            <person name="Peat N."/>
            <person name="Hayles J."/>
            <person name="Baker S.G."/>
            <person name="Basham D."/>
            <person name="Bowman S."/>
            <person name="Brooks K."/>
            <person name="Brown D."/>
            <person name="Brown S."/>
            <person name="Chillingworth T."/>
            <person name="Churcher C.M."/>
            <person name="Collins M."/>
            <person name="Connor R."/>
            <person name="Cronin A."/>
            <person name="Davis P."/>
            <person name="Feltwell T."/>
            <person name="Fraser A."/>
            <person name="Gentles S."/>
            <person name="Goble A."/>
            <person name="Hamlin N."/>
            <person name="Harris D.E."/>
            <person name="Hidalgo J."/>
            <person name="Hodgson G."/>
            <person name="Holroyd S."/>
            <person name="Hornsby T."/>
            <person name="Howarth S."/>
            <person name="Huckle E.J."/>
            <person name="Hunt S."/>
            <person name="Jagels K."/>
            <person name="James K.D."/>
            <person name="Jones L."/>
            <person name="Jones M."/>
            <person name="Leather S."/>
            <person name="McDonald S."/>
            <person name="McLean J."/>
            <person name="Mooney P."/>
            <person name="Moule S."/>
            <person name="Mungall K.L."/>
            <person name="Murphy L.D."/>
            <person name="Niblett D."/>
            <person name="Odell C."/>
            <person name="Oliver K."/>
            <person name="O'Neil S."/>
            <person name="Pearson D."/>
            <person name="Quail M.A."/>
            <person name="Rabbinowitsch E."/>
            <person name="Rutherford K.M."/>
            <person name="Rutter S."/>
            <person name="Saunders D."/>
            <person name="Seeger K."/>
            <person name="Sharp S."/>
            <person name="Skelton J."/>
            <person name="Simmonds M.N."/>
            <person name="Squares R."/>
            <person name="Squares S."/>
            <person name="Stevens K."/>
            <person name="Taylor K."/>
            <person name="Taylor R.G."/>
            <person name="Tivey A."/>
            <person name="Walsh S.V."/>
            <person name="Warren T."/>
            <person name="Whitehead S."/>
            <person name="Woodward J.R."/>
            <person name="Volckaert G."/>
            <person name="Aert R."/>
            <person name="Robben J."/>
            <person name="Grymonprez B."/>
            <person name="Weltjens I."/>
            <person name="Vanstreels E."/>
            <person name="Rieger M."/>
            <person name="Schaefer M."/>
            <person name="Mueller-Auer S."/>
            <person name="Gabel C."/>
            <person name="Fuchs M."/>
            <person name="Duesterhoeft A."/>
            <person name="Fritzc C."/>
            <person name="Holzer E."/>
            <person name="Moestl D."/>
            <person name="Hilbert H."/>
            <person name="Borzym K."/>
            <person name="Langer I."/>
            <person name="Beck A."/>
            <person name="Lehrach H."/>
            <person name="Reinhardt R."/>
            <person name="Pohl T.M."/>
            <person name="Eger P."/>
            <person name="Zimmermann W."/>
            <person name="Wedler H."/>
            <person name="Wambutt R."/>
            <person name="Purnelle B."/>
            <person name="Goffeau A."/>
            <person name="Cadieu E."/>
            <person name="Dreano S."/>
            <person name="Gloux S."/>
            <person name="Lelaure V."/>
            <person name="Mottier S."/>
            <person name="Galibert F."/>
            <person name="Aves S.J."/>
            <person name="Xiang Z."/>
            <person name="Hunt C."/>
            <person name="Moore K."/>
            <person name="Hurst S.M."/>
            <person name="Lucas M."/>
            <person name="Rochet M."/>
            <person name="Gaillardin C."/>
            <person name="Tallada V.A."/>
            <person name="Garzon A."/>
            <person name="Thode G."/>
            <person name="Daga R.R."/>
            <person name="Cruzado L."/>
            <person name="Jimenez J."/>
            <person name="Sanchez M."/>
            <person name="del Rey F."/>
            <person name="Benito J."/>
            <person name="Dominguez A."/>
            <person name="Revuelta J.L."/>
            <person name="Moreno S."/>
            <person name="Armstrong J."/>
            <person name="Forsburg S.L."/>
            <person name="Cerutti L."/>
            <person name="Lowe T."/>
            <person name="McCombie W.R."/>
            <person name="Paulsen I."/>
            <person name="Potashkin J."/>
            <person name="Shpakovski G.V."/>
            <person name="Ussery D."/>
            <person name="Barrell B.G."/>
            <person name="Nurse P."/>
        </authorList>
    </citation>
    <scope>NUCLEOTIDE SEQUENCE [LARGE SCALE GENOMIC DNA]</scope>
    <source>
        <strain>972 / ATCC 24843</strain>
    </source>
</reference>
<reference key="2">
    <citation type="journal article" date="2003" name="Biochem. Biophys. Res. Commun.">
        <title>Role of guanine nucleotide exchange factors for Rho family GTPases in the regulation of cell morphology and actin cytoskeleton in fission yeast.</title>
        <authorList>
            <person name="Iwaki N."/>
            <person name="Karatsu K."/>
            <person name="Miyamoto M."/>
        </authorList>
    </citation>
    <scope>FUNCTION</scope>
</reference>
<reference key="3">
    <citation type="journal article" date="2006" name="Nat. Biotechnol.">
        <title>ORFeome cloning and global analysis of protein localization in the fission yeast Schizosaccharomyces pombe.</title>
        <authorList>
            <person name="Matsuyama A."/>
            <person name="Arai R."/>
            <person name="Yashiroda Y."/>
            <person name="Shirai A."/>
            <person name="Kamata A."/>
            <person name="Sekido S."/>
            <person name="Kobayashi Y."/>
            <person name="Hashimoto A."/>
            <person name="Hamamoto M."/>
            <person name="Hiraoka Y."/>
            <person name="Horinouchi S."/>
            <person name="Yoshida M."/>
        </authorList>
    </citation>
    <scope>SUBCELLULAR LOCATION [LARGE SCALE ANALYSIS]</scope>
</reference>
<reference key="4">
    <citation type="journal article" date="2008" name="J. Proteome Res.">
        <title>Phosphoproteome analysis of fission yeast.</title>
        <authorList>
            <person name="Wilson-Grady J.T."/>
            <person name="Villen J."/>
            <person name="Gygi S.P."/>
        </authorList>
    </citation>
    <scope>PHOSPHORYLATION [LARGE SCALE ANALYSIS] AT SER-736 AND SER-977</scope>
    <scope>IDENTIFICATION BY MASS SPECTROMETRY</scope>
</reference>
<gene>
    <name type="primary">gef2</name>
    <name type="ORF">SPAC31A2.16</name>
</gene>
<comment type="function">
    <text evidence="3">Has a role in the control of cell polarity and cytokinesis. Involved in bipolar growth and septum formation.</text>
</comment>
<comment type="subcellular location">
    <subcellularLocation>
        <location evidence="4">Cytoplasm</location>
        <location evidence="4">Cytoskeleton</location>
        <location evidence="4">Microtubule organizing center</location>
        <location evidence="4">Spindle pole body</location>
    </subcellularLocation>
    <text>Septum.</text>
</comment>
<evidence type="ECO:0000255" key="1">
    <source>
        <dbReference type="PROSITE-ProRule" id="PRU00062"/>
    </source>
</evidence>
<evidence type="ECO:0000256" key="2">
    <source>
        <dbReference type="SAM" id="MobiDB-lite"/>
    </source>
</evidence>
<evidence type="ECO:0000269" key="3">
    <source>
    </source>
</evidence>
<evidence type="ECO:0000269" key="4">
    <source>
    </source>
</evidence>
<evidence type="ECO:0000269" key="5">
    <source>
    </source>
</evidence>
<dbReference type="EMBL" id="CU329670">
    <property type="protein sequence ID" value="CAA90474.1"/>
    <property type="molecule type" value="Genomic_DNA"/>
</dbReference>
<dbReference type="PIR" id="T38614">
    <property type="entry name" value="S58108"/>
</dbReference>
<dbReference type="RefSeq" id="NP_592928.1">
    <property type="nucleotide sequence ID" value="NM_001018329.2"/>
</dbReference>
<dbReference type="SMR" id="Q09733"/>
<dbReference type="BioGRID" id="279599">
    <property type="interactions" value="17"/>
</dbReference>
<dbReference type="DIP" id="DIP-59762N"/>
<dbReference type="FunCoup" id="Q09733">
    <property type="interactions" value="1"/>
</dbReference>
<dbReference type="IntAct" id="Q09733">
    <property type="interactions" value="1"/>
</dbReference>
<dbReference type="STRING" id="284812.Q09733"/>
<dbReference type="iPTMnet" id="Q09733"/>
<dbReference type="PaxDb" id="4896-SPAC31A2.16.1"/>
<dbReference type="EnsemblFungi" id="SPAC31A2.16.1">
    <property type="protein sequence ID" value="SPAC31A2.16.1:pep"/>
    <property type="gene ID" value="SPAC31A2.16"/>
</dbReference>
<dbReference type="GeneID" id="2543168"/>
<dbReference type="KEGG" id="spo:2543168"/>
<dbReference type="PomBase" id="SPAC31A2.16">
    <property type="gene designation" value="gef2"/>
</dbReference>
<dbReference type="VEuPathDB" id="FungiDB:SPAC31A2.16"/>
<dbReference type="eggNOG" id="ENOG502QVFV">
    <property type="taxonomic scope" value="Eukaryota"/>
</dbReference>
<dbReference type="HOGENOM" id="CLU_283307_0_0_1"/>
<dbReference type="InParanoid" id="Q09733"/>
<dbReference type="OMA" id="MRTESTY"/>
<dbReference type="PRO" id="PR:Q09733"/>
<dbReference type="Proteomes" id="UP000002485">
    <property type="component" value="Chromosome I"/>
</dbReference>
<dbReference type="GO" id="GO:0032153">
    <property type="term" value="C:cell division site"/>
    <property type="evidence" value="ECO:0007005"/>
    <property type="project" value="PomBase"/>
</dbReference>
<dbReference type="GO" id="GO:0005737">
    <property type="term" value="C:cytoplasm"/>
    <property type="evidence" value="ECO:0000318"/>
    <property type="project" value="GO_Central"/>
</dbReference>
<dbReference type="GO" id="GO:0005829">
    <property type="term" value="C:cytosol"/>
    <property type="evidence" value="ECO:0007005"/>
    <property type="project" value="PomBase"/>
</dbReference>
<dbReference type="GO" id="GO:0071341">
    <property type="term" value="C:medial cortical node"/>
    <property type="evidence" value="ECO:0000314"/>
    <property type="project" value="PomBase"/>
</dbReference>
<dbReference type="GO" id="GO:0110085">
    <property type="term" value="C:mitotic actomyosin contractile ring"/>
    <property type="evidence" value="ECO:0000314"/>
    <property type="project" value="PomBase"/>
</dbReference>
<dbReference type="GO" id="GO:0120105">
    <property type="term" value="C:mitotic actomyosin contractile ring, intermediate layer"/>
    <property type="evidence" value="ECO:0000314"/>
    <property type="project" value="PomBase"/>
</dbReference>
<dbReference type="GO" id="GO:0044732">
    <property type="term" value="C:mitotic spindle pole body"/>
    <property type="evidence" value="ECO:0007005"/>
    <property type="project" value="PomBase"/>
</dbReference>
<dbReference type="GO" id="GO:0005085">
    <property type="term" value="F:guanyl-nucleotide exchange factor activity"/>
    <property type="evidence" value="ECO:0000269"/>
    <property type="project" value="PomBase"/>
</dbReference>
<dbReference type="GO" id="GO:0000917">
    <property type="term" value="P:division septum assembly"/>
    <property type="evidence" value="ECO:0007669"/>
    <property type="project" value="UniProtKB-KW"/>
</dbReference>
<dbReference type="GO" id="GO:0035556">
    <property type="term" value="P:intracellular signal transduction"/>
    <property type="evidence" value="ECO:0007669"/>
    <property type="project" value="InterPro"/>
</dbReference>
<dbReference type="GO" id="GO:1902408">
    <property type="term" value="P:mitotic cytokinesis, division site positioning"/>
    <property type="evidence" value="ECO:0000316"/>
    <property type="project" value="PomBase"/>
</dbReference>
<dbReference type="Gene3D" id="1.20.900.10">
    <property type="entry name" value="Dbl homology (DH) domain"/>
    <property type="match status" value="1"/>
</dbReference>
<dbReference type="InterPro" id="IPR035899">
    <property type="entry name" value="DBL_dom_sf"/>
</dbReference>
<dbReference type="InterPro" id="IPR000219">
    <property type="entry name" value="DH_dom"/>
</dbReference>
<dbReference type="InterPro" id="IPR051092">
    <property type="entry name" value="FYVE_RhoGEF_PH"/>
</dbReference>
<dbReference type="InterPro" id="IPR001331">
    <property type="entry name" value="GDS_CDC24_CS"/>
</dbReference>
<dbReference type="InterPro" id="IPR032634">
    <property type="entry name" value="Gef2/Nod1_dom"/>
</dbReference>
<dbReference type="PANTHER" id="PTHR12673">
    <property type="entry name" value="FACIOGENITAL DYSPLASIA PROTEIN"/>
    <property type="match status" value="1"/>
</dbReference>
<dbReference type="PANTHER" id="PTHR12673:SF159">
    <property type="entry name" value="LD03170P"/>
    <property type="match status" value="1"/>
</dbReference>
<dbReference type="Pfam" id="PF17114">
    <property type="entry name" value="Nod1"/>
    <property type="match status" value="1"/>
</dbReference>
<dbReference type="Pfam" id="PF00621">
    <property type="entry name" value="RhoGEF"/>
    <property type="match status" value="1"/>
</dbReference>
<dbReference type="SMART" id="SM00325">
    <property type="entry name" value="RhoGEF"/>
    <property type="match status" value="1"/>
</dbReference>
<dbReference type="SUPFAM" id="SSF48065">
    <property type="entry name" value="DBL homology domain (DH-domain)"/>
    <property type="match status" value="1"/>
</dbReference>
<dbReference type="PROSITE" id="PS00741">
    <property type="entry name" value="DH_1"/>
    <property type="match status" value="1"/>
</dbReference>
<dbReference type="PROSITE" id="PS50010">
    <property type="entry name" value="DH_2"/>
    <property type="match status" value="1"/>
</dbReference>
<proteinExistence type="evidence at protein level"/>
<sequence length="1101" mass="126538">MDVGTMGSRAELLAISIQFGGLWVFRDLLQMNPLFEQDHVFCTFNHPNMGLVLISFAKVDGHILAAYALSKLGPDTFSICYPFSSKLDAFAQTLDLEWQIASMHKEAAACVYEFLCVESVCLHTGENWRESVIEPEYASYIFDTINVFQSSSLTRELYSLGEPNGVREFVVDAIFDIKVDNSWWEDPSNSYWKTVIGSREMFEDSRKKTSSPSPSFASSKDAGTIPAIQKKKSLLIEMMETESTYVERLRHLVNDYALPLRDLAKSSKKLLGLYELNTLFPPCLNKLIQLNSAFLDEFEAIMSDLNFEDIDEKKFEEIDLRLACCFESHFFAFSQHYPRYLEQSNDFGNVLKMASKIPKFVEFHDQVKLNANMNVGLSQLIMEPVQRIPRYSLFLDQIILLTQEGECQHTYVRSVEIIKNIAEMPTVDAEERSRIFAGLQHIIPDLAPNMISNSRNFIDCIDVTREFLKNGQLHLIPYTLILFNDRICLVQRRSKSSIASTILDLRKQNPRNSYSKEKRAQYIGSNMNEAVELTRSMVEENTIFLISKYASSPSFFNEYPILKFRCDFENVRTMDRFYQSFQKALSMNKSQPSCLSFSKLNDFVVFFNNYSRFEYEKESKRSDIVCICTNDANVDKHKFLQDGNIVITFFQQDEDFHLSFDSWLGVSLPTEAVIAKEDLREACLNYLINIKRLLLCPFSNRNFSSLDLYSNLIQHLLSANSSPRKSRLSFGGRPGSPSKISLSLNRFYNQGGLSKSCATLPSQMYNLDHNNISQKSLKFNTHNTSKASAEKTVEHLEAFKGGFKYHTDLKNLLYPLSEKEKIEGDELYDNILKETFNEELLSHYPPNIIYATFQKYLSSFINRKFGVLLSSSFIQQLNTVENLNLSFNSTDAVYHLKKILQDLPESSLKILENIFSIASDLLLRLPLKDQCDFVTKQLAIALAPSMFGSNAVELVYYLAYHSDRIFGTVEELPTPVSPANSNNDKQLDESKFQAIAMKEMPERHPKEILPGQIEREAYEDLRRKYHLTLARLAQMTRLNEDSKKSIPLLYDRFNHDLKLIKQSVQASLIRKQCELDTAKWTLEEYESKLNAKEGCQTNIFI</sequence>
<name>GEF2_SCHPO</name>
<keyword id="KW-0131">Cell cycle</keyword>
<keyword id="KW-0132">Cell division</keyword>
<keyword id="KW-0963">Cytoplasm</keyword>
<keyword id="KW-0206">Cytoskeleton</keyword>
<keyword id="KW-0344">Guanine-nucleotide releasing factor</keyword>
<keyword id="KW-0597">Phosphoprotein</keyword>
<keyword id="KW-1185">Reference proteome</keyword>
<keyword id="KW-0717">Septation</keyword>
<accession>Q09733</accession>